<proteinExistence type="inferred from homology"/>
<reference key="1">
    <citation type="journal article" date="1997" name="Mol. Microbiol.">
        <title>Interspecies recombination, and phylogenetic distortions, within the glutamine synthetase and shikimate dehydrogenase genes of Neisseria meningitidis and commensal Neisseria species.</title>
        <authorList>
            <person name="Zhou J."/>
            <person name="Bowler L.D."/>
            <person name="Spratt B.G."/>
        </authorList>
    </citation>
    <scope>NUCLEOTIDE SEQUENCE [GENOMIC DNA]</scope>
    <source>
        <strain>ATCC 43768 / DSM 22809 / CCUG 18030 / CIP 100113 / NCTC 11858 / LNP N 462</strain>
    </source>
</reference>
<evidence type="ECO:0000255" key="1">
    <source>
        <dbReference type="HAMAP-Rule" id="MF_00222"/>
    </source>
</evidence>
<comment type="function">
    <text evidence="1">Involved in the biosynthesis of the chorismate, which leads to the biosynthesis of aromatic amino acids. Catalyzes the reversible NADPH linked reduction of 3-dehydroshikimate (DHSA) to yield shikimate (SA).</text>
</comment>
<comment type="catalytic activity">
    <reaction evidence="1">
        <text>shikimate + NADP(+) = 3-dehydroshikimate + NADPH + H(+)</text>
        <dbReference type="Rhea" id="RHEA:17737"/>
        <dbReference type="ChEBI" id="CHEBI:15378"/>
        <dbReference type="ChEBI" id="CHEBI:16630"/>
        <dbReference type="ChEBI" id="CHEBI:36208"/>
        <dbReference type="ChEBI" id="CHEBI:57783"/>
        <dbReference type="ChEBI" id="CHEBI:58349"/>
        <dbReference type="EC" id="1.1.1.25"/>
    </reaction>
</comment>
<comment type="pathway">
    <text evidence="1">Metabolic intermediate biosynthesis; chorismate biosynthesis; chorismate from D-erythrose 4-phosphate and phosphoenolpyruvate: step 4/7.</text>
</comment>
<comment type="subunit">
    <text evidence="1">Homodimer.</text>
</comment>
<comment type="similarity">
    <text evidence="1">Belongs to the shikimate dehydrogenase family.</text>
</comment>
<protein>
    <recommendedName>
        <fullName evidence="1">Shikimate dehydrogenase (NADP(+))</fullName>
        <shortName evidence="1">SDH</shortName>
        <ecNumber evidence="1">1.1.1.25</ecNumber>
    </recommendedName>
</protein>
<sequence length="269" mass="28567">MTALPRYAVFGNPVAHSKSPQIHQQFTLQEGVDIEYGRICADIDGFAQAVSTFFETGGCGANVTVPFKQEAFALADEHSDRALAAGAVNTLILLKNGKLRGDNTDGIGLVNDITQVKNIAIEGKTILLLGAGGAVRGVIPVLKEHRPARIVIANRTHAKAEELARLFGIEAVPMADLNGGFDIIINGTSGGLSGQLPAVNPEIFRSCRLAYDMVYGDAAQTFLNFAQSNGAAEVSDGLGMLVGQAAASYHIWRGFTPDIRPVIEYMKAL</sequence>
<name>AROE_NEIPO</name>
<accession>P95399</accession>
<dbReference type="EC" id="1.1.1.25" evidence="1"/>
<dbReference type="EMBL" id="U82844">
    <property type="protein sequence ID" value="AAC44915.1"/>
    <property type="molecule type" value="Genomic_DNA"/>
</dbReference>
<dbReference type="RefSeq" id="WP_003751536.1">
    <property type="nucleotide sequence ID" value="NZ_CAUIXS010000002.1"/>
</dbReference>
<dbReference type="SMR" id="P95399"/>
<dbReference type="GeneID" id="86929700"/>
<dbReference type="UniPathway" id="UPA00053">
    <property type="reaction ID" value="UER00087"/>
</dbReference>
<dbReference type="GO" id="GO:0005829">
    <property type="term" value="C:cytosol"/>
    <property type="evidence" value="ECO:0007669"/>
    <property type="project" value="TreeGrafter"/>
</dbReference>
<dbReference type="GO" id="GO:0050661">
    <property type="term" value="F:NADP binding"/>
    <property type="evidence" value="ECO:0007669"/>
    <property type="project" value="InterPro"/>
</dbReference>
<dbReference type="GO" id="GO:0004764">
    <property type="term" value="F:shikimate 3-dehydrogenase (NADP+) activity"/>
    <property type="evidence" value="ECO:0007669"/>
    <property type="project" value="UniProtKB-UniRule"/>
</dbReference>
<dbReference type="GO" id="GO:0008652">
    <property type="term" value="P:amino acid biosynthetic process"/>
    <property type="evidence" value="ECO:0007669"/>
    <property type="project" value="UniProtKB-KW"/>
</dbReference>
<dbReference type="GO" id="GO:0009073">
    <property type="term" value="P:aromatic amino acid family biosynthetic process"/>
    <property type="evidence" value="ECO:0007669"/>
    <property type="project" value="UniProtKB-KW"/>
</dbReference>
<dbReference type="GO" id="GO:0009423">
    <property type="term" value="P:chorismate biosynthetic process"/>
    <property type="evidence" value="ECO:0007669"/>
    <property type="project" value="UniProtKB-UniRule"/>
</dbReference>
<dbReference type="GO" id="GO:0019632">
    <property type="term" value="P:shikimate metabolic process"/>
    <property type="evidence" value="ECO:0007669"/>
    <property type="project" value="InterPro"/>
</dbReference>
<dbReference type="CDD" id="cd01065">
    <property type="entry name" value="NAD_bind_Shikimate_DH"/>
    <property type="match status" value="1"/>
</dbReference>
<dbReference type="FunFam" id="3.40.50.10860:FF:000006">
    <property type="entry name" value="Shikimate dehydrogenase (NADP(+))"/>
    <property type="match status" value="1"/>
</dbReference>
<dbReference type="Gene3D" id="3.40.50.10860">
    <property type="entry name" value="Leucine Dehydrogenase, chain A, domain 1"/>
    <property type="match status" value="1"/>
</dbReference>
<dbReference type="Gene3D" id="3.40.50.720">
    <property type="entry name" value="NAD(P)-binding Rossmann-like Domain"/>
    <property type="match status" value="1"/>
</dbReference>
<dbReference type="HAMAP" id="MF_00222">
    <property type="entry name" value="Shikimate_DH_AroE"/>
    <property type="match status" value="1"/>
</dbReference>
<dbReference type="InterPro" id="IPR046346">
    <property type="entry name" value="Aminoacid_DH-like_N_sf"/>
</dbReference>
<dbReference type="InterPro" id="IPR036291">
    <property type="entry name" value="NAD(P)-bd_dom_sf"/>
</dbReference>
<dbReference type="InterPro" id="IPR041121">
    <property type="entry name" value="SDH_C"/>
</dbReference>
<dbReference type="InterPro" id="IPR011342">
    <property type="entry name" value="Shikimate_DH"/>
</dbReference>
<dbReference type="InterPro" id="IPR013708">
    <property type="entry name" value="Shikimate_DH-bd_N"/>
</dbReference>
<dbReference type="InterPro" id="IPR022893">
    <property type="entry name" value="Shikimate_DH_fam"/>
</dbReference>
<dbReference type="InterPro" id="IPR006151">
    <property type="entry name" value="Shikm_DH/Glu-tRNA_Rdtase"/>
</dbReference>
<dbReference type="NCBIfam" id="TIGR00507">
    <property type="entry name" value="aroE"/>
    <property type="match status" value="1"/>
</dbReference>
<dbReference type="NCBIfam" id="NF001310">
    <property type="entry name" value="PRK00258.1-2"/>
    <property type="match status" value="1"/>
</dbReference>
<dbReference type="PANTHER" id="PTHR21089:SF1">
    <property type="entry name" value="BIFUNCTIONAL 3-DEHYDROQUINATE DEHYDRATASE_SHIKIMATE DEHYDROGENASE, CHLOROPLASTIC"/>
    <property type="match status" value="1"/>
</dbReference>
<dbReference type="PANTHER" id="PTHR21089">
    <property type="entry name" value="SHIKIMATE DEHYDROGENASE"/>
    <property type="match status" value="1"/>
</dbReference>
<dbReference type="Pfam" id="PF18317">
    <property type="entry name" value="SDH_C"/>
    <property type="match status" value="1"/>
</dbReference>
<dbReference type="Pfam" id="PF01488">
    <property type="entry name" value="Shikimate_DH"/>
    <property type="match status" value="1"/>
</dbReference>
<dbReference type="Pfam" id="PF08501">
    <property type="entry name" value="Shikimate_dh_N"/>
    <property type="match status" value="1"/>
</dbReference>
<dbReference type="SUPFAM" id="SSF53223">
    <property type="entry name" value="Aminoacid dehydrogenase-like, N-terminal domain"/>
    <property type="match status" value="1"/>
</dbReference>
<dbReference type="SUPFAM" id="SSF51735">
    <property type="entry name" value="NAD(P)-binding Rossmann-fold domains"/>
    <property type="match status" value="1"/>
</dbReference>
<gene>
    <name evidence="1" type="primary">aroE</name>
</gene>
<keyword id="KW-0028">Amino-acid biosynthesis</keyword>
<keyword id="KW-0057">Aromatic amino acid biosynthesis</keyword>
<keyword id="KW-0521">NADP</keyword>
<keyword id="KW-0560">Oxidoreductase</keyword>
<feature type="chain" id="PRO_0000136023" description="Shikimate dehydrogenase (NADP(+))">
    <location>
        <begin position="1"/>
        <end position="269"/>
    </location>
</feature>
<feature type="active site" description="Proton acceptor" evidence="1">
    <location>
        <position position="68"/>
    </location>
</feature>
<feature type="binding site" evidence="1">
    <location>
        <begin position="17"/>
        <end position="19"/>
    </location>
    <ligand>
        <name>shikimate</name>
        <dbReference type="ChEBI" id="CHEBI:36208"/>
    </ligand>
</feature>
<feature type="binding site" evidence="1">
    <location>
        <position position="64"/>
    </location>
    <ligand>
        <name>shikimate</name>
        <dbReference type="ChEBI" id="CHEBI:36208"/>
    </ligand>
</feature>
<feature type="binding site" evidence="1">
    <location>
        <position position="80"/>
    </location>
    <ligand>
        <name>NADP(+)</name>
        <dbReference type="ChEBI" id="CHEBI:58349"/>
    </ligand>
</feature>
<feature type="binding site" evidence="1">
    <location>
        <position position="89"/>
    </location>
    <ligand>
        <name>shikimate</name>
        <dbReference type="ChEBI" id="CHEBI:36208"/>
    </ligand>
</feature>
<feature type="binding site" evidence="1">
    <location>
        <position position="105"/>
    </location>
    <ligand>
        <name>shikimate</name>
        <dbReference type="ChEBI" id="CHEBI:36208"/>
    </ligand>
</feature>
<feature type="binding site" evidence="1">
    <location>
        <begin position="130"/>
        <end position="134"/>
    </location>
    <ligand>
        <name>NADP(+)</name>
        <dbReference type="ChEBI" id="CHEBI:58349"/>
    </ligand>
</feature>
<feature type="binding site" evidence="1">
    <location>
        <begin position="154"/>
        <end position="159"/>
    </location>
    <ligand>
        <name>NADP(+)</name>
        <dbReference type="ChEBI" id="CHEBI:58349"/>
    </ligand>
</feature>
<feature type="binding site" evidence="1">
    <location>
        <position position="213"/>
    </location>
    <ligand>
        <name>NADP(+)</name>
        <dbReference type="ChEBI" id="CHEBI:58349"/>
    </ligand>
</feature>
<feature type="binding site" evidence="1">
    <location>
        <position position="215"/>
    </location>
    <ligand>
        <name>shikimate</name>
        <dbReference type="ChEBI" id="CHEBI:36208"/>
    </ligand>
</feature>
<feature type="binding site" evidence="1">
    <location>
        <position position="237"/>
    </location>
    <ligand>
        <name>NADP(+)</name>
        <dbReference type="ChEBI" id="CHEBI:58349"/>
    </ligand>
</feature>
<organism>
    <name type="scientific">Neisseria polysaccharea</name>
    <dbReference type="NCBI Taxonomy" id="489"/>
    <lineage>
        <taxon>Bacteria</taxon>
        <taxon>Pseudomonadati</taxon>
        <taxon>Pseudomonadota</taxon>
        <taxon>Betaproteobacteria</taxon>
        <taxon>Neisseriales</taxon>
        <taxon>Neisseriaceae</taxon>
        <taxon>Neisseria</taxon>
    </lineage>
</organism>